<keyword id="KW-0067">ATP-binding</keyword>
<keyword id="KW-0436">Ligase</keyword>
<keyword id="KW-0479">Metal-binding</keyword>
<keyword id="KW-0547">Nucleotide-binding</keyword>
<keyword id="KW-0671">Queuosine biosynthesis</keyword>
<keyword id="KW-0862">Zinc</keyword>
<protein>
    <recommendedName>
        <fullName evidence="1">7-cyano-7-deazaguanine synthase</fullName>
        <ecNumber evidence="1">6.3.4.20</ecNumber>
    </recommendedName>
    <alternativeName>
        <fullName evidence="1">7-cyano-7-carbaguanine synthase</fullName>
    </alternativeName>
    <alternativeName>
        <fullName evidence="1">PreQ(0) synthase</fullName>
    </alternativeName>
    <alternativeName>
        <fullName evidence="1">Queuosine biosynthesis protein QueC</fullName>
    </alternativeName>
</protein>
<dbReference type="EC" id="6.3.4.20" evidence="1"/>
<dbReference type="EMBL" id="CP000024">
    <property type="protein sequence ID" value="AAV62416.1"/>
    <property type="molecule type" value="Genomic_DNA"/>
</dbReference>
<dbReference type="RefSeq" id="WP_002946194.1">
    <property type="nucleotide sequence ID" value="NC_006449.1"/>
</dbReference>
<dbReference type="SMR" id="Q5M064"/>
<dbReference type="GeneID" id="66898711"/>
<dbReference type="KEGG" id="stc:str0825"/>
<dbReference type="HOGENOM" id="CLU_081854_0_0_9"/>
<dbReference type="UniPathway" id="UPA00391"/>
<dbReference type="GO" id="GO:0005524">
    <property type="term" value="F:ATP binding"/>
    <property type="evidence" value="ECO:0007669"/>
    <property type="project" value="UniProtKB-UniRule"/>
</dbReference>
<dbReference type="GO" id="GO:0016879">
    <property type="term" value="F:ligase activity, forming carbon-nitrogen bonds"/>
    <property type="evidence" value="ECO:0007669"/>
    <property type="project" value="UniProtKB-UniRule"/>
</dbReference>
<dbReference type="GO" id="GO:0008270">
    <property type="term" value="F:zinc ion binding"/>
    <property type="evidence" value="ECO:0007669"/>
    <property type="project" value="UniProtKB-UniRule"/>
</dbReference>
<dbReference type="GO" id="GO:0008616">
    <property type="term" value="P:queuosine biosynthetic process"/>
    <property type="evidence" value="ECO:0007669"/>
    <property type="project" value="UniProtKB-UniRule"/>
</dbReference>
<dbReference type="CDD" id="cd01995">
    <property type="entry name" value="QueC-like"/>
    <property type="match status" value="1"/>
</dbReference>
<dbReference type="FunFam" id="3.40.50.620:FF:000017">
    <property type="entry name" value="7-cyano-7-deazaguanine synthase"/>
    <property type="match status" value="1"/>
</dbReference>
<dbReference type="Gene3D" id="3.40.50.620">
    <property type="entry name" value="HUPs"/>
    <property type="match status" value="1"/>
</dbReference>
<dbReference type="HAMAP" id="MF_01633">
    <property type="entry name" value="QueC"/>
    <property type="match status" value="1"/>
</dbReference>
<dbReference type="InterPro" id="IPR018317">
    <property type="entry name" value="QueC"/>
</dbReference>
<dbReference type="InterPro" id="IPR014729">
    <property type="entry name" value="Rossmann-like_a/b/a_fold"/>
</dbReference>
<dbReference type="NCBIfam" id="TIGR00364">
    <property type="entry name" value="7-cyano-7-deazaguanine synthase QueC"/>
    <property type="match status" value="1"/>
</dbReference>
<dbReference type="PANTHER" id="PTHR42914">
    <property type="entry name" value="7-CYANO-7-DEAZAGUANINE SYNTHASE"/>
    <property type="match status" value="1"/>
</dbReference>
<dbReference type="PANTHER" id="PTHR42914:SF1">
    <property type="entry name" value="7-CYANO-7-DEAZAGUANINE SYNTHASE"/>
    <property type="match status" value="1"/>
</dbReference>
<dbReference type="Pfam" id="PF06508">
    <property type="entry name" value="QueC"/>
    <property type="match status" value="1"/>
</dbReference>
<dbReference type="PIRSF" id="PIRSF006293">
    <property type="entry name" value="ExsB"/>
    <property type="match status" value="1"/>
</dbReference>
<dbReference type="SUPFAM" id="SSF52402">
    <property type="entry name" value="Adenine nucleotide alpha hydrolases-like"/>
    <property type="match status" value="1"/>
</dbReference>
<organism>
    <name type="scientific">Streptococcus thermophilus (strain CNRZ 1066)</name>
    <dbReference type="NCBI Taxonomy" id="299768"/>
    <lineage>
        <taxon>Bacteria</taxon>
        <taxon>Bacillati</taxon>
        <taxon>Bacillota</taxon>
        <taxon>Bacilli</taxon>
        <taxon>Lactobacillales</taxon>
        <taxon>Streptococcaceae</taxon>
        <taxon>Streptococcus</taxon>
    </lineage>
</organism>
<name>QUEC_STRT1</name>
<gene>
    <name evidence="1" type="primary">queC</name>
    <name type="ordered locus">str0825</name>
</gene>
<evidence type="ECO:0000255" key="1">
    <source>
        <dbReference type="HAMAP-Rule" id="MF_01633"/>
    </source>
</evidence>
<comment type="function">
    <text evidence="1">Catalyzes the ATP-dependent conversion of 7-carboxy-7-deazaguanine (CDG) to 7-cyano-7-deazaguanine (preQ(0)).</text>
</comment>
<comment type="catalytic activity">
    <reaction evidence="1">
        <text>7-carboxy-7-deazaguanine + NH4(+) + ATP = 7-cyano-7-deazaguanine + ADP + phosphate + H2O + H(+)</text>
        <dbReference type="Rhea" id="RHEA:27982"/>
        <dbReference type="ChEBI" id="CHEBI:15377"/>
        <dbReference type="ChEBI" id="CHEBI:15378"/>
        <dbReference type="ChEBI" id="CHEBI:28938"/>
        <dbReference type="ChEBI" id="CHEBI:30616"/>
        <dbReference type="ChEBI" id="CHEBI:43474"/>
        <dbReference type="ChEBI" id="CHEBI:45075"/>
        <dbReference type="ChEBI" id="CHEBI:61036"/>
        <dbReference type="ChEBI" id="CHEBI:456216"/>
        <dbReference type="EC" id="6.3.4.20"/>
    </reaction>
</comment>
<comment type="cofactor">
    <cofactor evidence="1">
        <name>Zn(2+)</name>
        <dbReference type="ChEBI" id="CHEBI:29105"/>
    </cofactor>
    <text evidence="1">Binds 1 zinc ion per subunit.</text>
</comment>
<comment type="pathway">
    <text evidence="1">Purine metabolism; 7-cyano-7-deazaguanine biosynthesis.</text>
</comment>
<comment type="subunit">
    <text evidence="1">Homodimer.</text>
</comment>
<comment type="similarity">
    <text evidence="1">Belongs to the QueC family.</text>
</comment>
<reference key="1">
    <citation type="journal article" date="2004" name="Nat. Biotechnol.">
        <title>Complete sequence and comparative genome analysis of the dairy bacterium Streptococcus thermophilus.</title>
        <authorList>
            <person name="Bolotin A."/>
            <person name="Quinquis B."/>
            <person name="Renault P."/>
            <person name="Sorokin A."/>
            <person name="Ehrlich S.D."/>
            <person name="Kulakauskas S."/>
            <person name="Lapidus A."/>
            <person name="Goltsman E."/>
            <person name="Mazur M."/>
            <person name="Pusch G.D."/>
            <person name="Fonstein M."/>
            <person name="Overbeek R."/>
            <person name="Kyprides N."/>
            <person name="Purnelle B."/>
            <person name="Prozzi D."/>
            <person name="Ngui K."/>
            <person name="Masuy D."/>
            <person name="Hancy F."/>
            <person name="Burteau S."/>
            <person name="Boutry M."/>
            <person name="Delcour J."/>
            <person name="Goffeau A."/>
            <person name="Hols P."/>
        </authorList>
    </citation>
    <scope>NUCLEOTIDE SEQUENCE [LARGE SCALE GENOMIC DNA]</scope>
    <source>
        <strain>CNRZ 1066</strain>
    </source>
</reference>
<feature type="chain" id="PRO_0000246943" description="7-cyano-7-deazaguanine synthase">
    <location>
        <begin position="1"/>
        <end position="217"/>
    </location>
</feature>
<feature type="binding site" evidence="1">
    <location>
        <begin position="10"/>
        <end position="20"/>
    </location>
    <ligand>
        <name>ATP</name>
        <dbReference type="ChEBI" id="CHEBI:30616"/>
    </ligand>
</feature>
<feature type="binding site" evidence="1">
    <location>
        <position position="185"/>
    </location>
    <ligand>
        <name>Zn(2+)</name>
        <dbReference type="ChEBI" id="CHEBI:29105"/>
    </ligand>
</feature>
<feature type="binding site" evidence="1">
    <location>
        <position position="194"/>
    </location>
    <ligand>
        <name>Zn(2+)</name>
        <dbReference type="ChEBI" id="CHEBI:29105"/>
    </ligand>
</feature>
<feature type="binding site" evidence="1">
    <location>
        <position position="197"/>
    </location>
    <ligand>
        <name>Zn(2+)</name>
        <dbReference type="ChEBI" id="CHEBI:29105"/>
    </ligand>
</feature>
<feature type="binding site" evidence="1">
    <location>
        <position position="200"/>
    </location>
    <ligand>
        <name>Zn(2+)</name>
        <dbReference type="ChEBI" id="CHEBI:29105"/>
    </ligand>
</feature>
<accession>Q5M064</accession>
<proteinExistence type="inferred from homology"/>
<sequence>MKRQSALVVFSGGQDSTTCLFWALKHYETVELVTFAYGQRHSLEIEVAKEIAQEQGLKHHVLDMSLLGQITENALTSDIEIEAEKGEVPNTFVDGRNHLFLSFAAVLAKQRGIIDIVTGVCETDFSGYPDCRDVFVKSLNVTLNLAMAYDFVIQTPLMWLDKAETWALADQLGAFDYVREKTLTCYNGIIGTGCGDCPACHLRQKGLEKYLAEKGDA</sequence>